<organism>
    <name type="scientific">Aster yellows witches'-broom phytoplasma (strain AYWB)</name>
    <dbReference type="NCBI Taxonomy" id="322098"/>
    <lineage>
        <taxon>Bacteria</taxon>
        <taxon>Bacillati</taxon>
        <taxon>Mycoplasmatota</taxon>
        <taxon>Mollicutes</taxon>
        <taxon>Acholeplasmatales</taxon>
        <taxon>Acholeplasmataceae</taxon>
        <taxon>Candidatus Phytoplasma</taxon>
        <taxon>16SrI (Aster yellows group)</taxon>
    </lineage>
</organism>
<protein>
    <recommendedName>
        <fullName evidence="1">Thymidylate kinase</fullName>
        <ecNumber evidence="1">2.7.4.9</ecNumber>
    </recommendedName>
    <alternativeName>
        <fullName evidence="1">dTMP kinase</fullName>
    </alternativeName>
</protein>
<reference key="1">
    <citation type="journal article" date="2006" name="J. Bacteriol.">
        <title>Living with genome instability: the adaptation of phytoplasmas to diverse environments of their insect and plant hosts.</title>
        <authorList>
            <person name="Bai X."/>
            <person name="Zhang J."/>
            <person name="Ewing A."/>
            <person name="Miller S.A."/>
            <person name="Jancso Radek A."/>
            <person name="Shevchenko D.V."/>
            <person name="Tsukerman K."/>
            <person name="Walunas T."/>
            <person name="Lapidus A."/>
            <person name="Campbell J.W."/>
            <person name="Hogenhout S.A."/>
        </authorList>
    </citation>
    <scope>NUCLEOTIDE SEQUENCE [LARGE SCALE GENOMIC DNA]</scope>
    <source>
        <strain>AYWB</strain>
    </source>
</reference>
<comment type="function">
    <text evidence="1">Phosphorylation of dTMP to form dTDP in both de novo and salvage pathways of dTTP synthesis.</text>
</comment>
<comment type="catalytic activity">
    <reaction evidence="1">
        <text>dTMP + ATP = dTDP + ADP</text>
        <dbReference type="Rhea" id="RHEA:13517"/>
        <dbReference type="ChEBI" id="CHEBI:30616"/>
        <dbReference type="ChEBI" id="CHEBI:58369"/>
        <dbReference type="ChEBI" id="CHEBI:63528"/>
        <dbReference type="ChEBI" id="CHEBI:456216"/>
        <dbReference type="EC" id="2.7.4.9"/>
    </reaction>
</comment>
<comment type="similarity">
    <text evidence="1">Belongs to the thymidylate kinase family.</text>
</comment>
<feature type="chain" id="PRO_1000023145" description="Thymidylate kinase">
    <location>
        <begin position="1"/>
        <end position="207"/>
    </location>
</feature>
<feature type="binding site" evidence="1">
    <location>
        <begin position="7"/>
        <end position="14"/>
    </location>
    <ligand>
        <name>ATP</name>
        <dbReference type="ChEBI" id="CHEBI:30616"/>
    </ligand>
</feature>
<sequence>MFISFEGCEGTGKTTHSSYLFEKLSKKYSCVLTKEPGGGLFNEVIRNILLHSYNKQIDFHTEALLFAADRAEHLSKLIIPALQQNKIVICDRYLDSTIAYQVYARGLSKDFVLNINNLALNYMPNITFYLDLDPKIGIQRVKQFRPKEINSFDLQKLSFHKKVRKGYLDLYQKDQQKRIFLIDASKSLEKIYNIIEQKLKEVFQIDL</sequence>
<keyword id="KW-0067">ATP-binding</keyword>
<keyword id="KW-0418">Kinase</keyword>
<keyword id="KW-0545">Nucleotide biosynthesis</keyword>
<keyword id="KW-0547">Nucleotide-binding</keyword>
<keyword id="KW-0808">Transferase</keyword>
<dbReference type="EC" id="2.7.4.9" evidence="1"/>
<dbReference type="EMBL" id="CP000061">
    <property type="protein sequence ID" value="ABC65609.1"/>
    <property type="molecule type" value="Genomic_DNA"/>
</dbReference>
<dbReference type="RefSeq" id="WP_011412772.1">
    <property type="nucleotide sequence ID" value="NC_007716.1"/>
</dbReference>
<dbReference type="SMR" id="Q2NIY4"/>
<dbReference type="STRING" id="322098.AYWB_492"/>
<dbReference type="KEGG" id="ayw:AYWB_492"/>
<dbReference type="eggNOG" id="COG0125">
    <property type="taxonomic scope" value="Bacteria"/>
</dbReference>
<dbReference type="HOGENOM" id="CLU_049131_0_2_14"/>
<dbReference type="OrthoDB" id="9774907at2"/>
<dbReference type="PhylomeDB" id="Q2NIY4"/>
<dbReference type="Proteomes" id="UP000001934">
    <property type="component" value="Chromosome"/>
</dbReference>
<dbReference type="GO" id="GO:0005829">
    <property type="term" value="C:cytosol"/>
    <property type="evidence" value="ECO:0007669"/>
    <property type="project" value="TreeGrafter"/>
</dbReference>
<dbReference type="GO" id="GO:0005524">
    <property type="term" value="F:ATP binding"/>
    <property type="evidence" value="ECO:0007669"/>
    <property type="project" value="UniProtKB-UniRule"/>
</dbReference>
<dbReference type="GO" id="GO:0004798">
    <property type="term" value="F:dTMP kinase activity"/>
    <property type="evidence" value="ECO:0007669"/>
    <property type="project" value="UniProtKB-UniRule"/>
</dbReference>
<dbReference type="GO" id="GO:0006233">
    <property type="term" value="P:dTDP biosynthetic process"/>
    <property type="evidence" value="ECO:0007669"/>
    <property type="project" value="InterPro"/>
</dbReference>
<dbReference type="GO" id="GO:0006235">
    <property type="term" value="P:dTTP biosynthetic process"/>
    <property type="evidence" value="ECO:0007669"/>
    <property type="project" value="UniProtKB-UniRule"/>
</dbReference>
<dbReference type="GO" id="GO:0006227">
    <property type="term" value="P:dUDP biosynthetic process"/>
    <property type="evidence" value="ECO:0007669"/>
    <property type="project" value="TreeGrafter"/>
</dbReference>
<dbReference type="CDD" id="cd01672">
    <property type="entry name" value="TMPK"/>
    <property type="match status" value="1"/>
</dbReference>
<dbReference type="FunFam" id="3.40.50.300:FF:000225">
    <property type="entry name" value="Thymidylate kinase"/>
    <property type="match status" value="1"/>
</dbReference>
<dbReference type="Gene3D" id="3.40.50.300">
    <property type="entry name" value="P-loop containing nucleotide triphosphate hydrolases"/>
    <property type="match status" value="1"/>
</dbReference>
<dbReference type="HAMAP" id="MF_00165">
    <property type="entry name" value="Thymidylate_kinase"/>
    <property type="match status" value="1"/>
</dbReference>
<dbReference type="InterPro" id="IPR027417">
    <property type="entry name" value="P-loop_NTPase"/>
</dbReference>
<dbReference type="InterPro" id="IPR039430">
    <property type="entry name" value="Thymidylate_kin-like_dom"/>
</dbReference>
<dbReference type="InterPro" id="IPR018095">
    <property type="entry name" value="Thymidylate_kin_CS"/>
</dbReference>
<dbReference type="InterPro" id="IPR018094">
    <property type="entry name" value="Thymidylate_kinase"/>
</dbReference>
<dbReference type="NCBIfam" id="TIGR00041">
    <property type="entry name" value="DTMP_kinase"/>
    <property type="match status" value="1"/>
</dbReference>
<dbReference type="PANTHER" id="PTHR10344">
    <property type="entry name" value="THYMIDYLATE KINASE"/>
    <property type="match status" value="1"/>
</dbReference>
<dbReference type="PANTHER" id="PTHR10344:SF4">
    <property type="entry name" value="UMP-CMP KINASE 2, MITOCHONDRIAL"/>
    <property type="match status" value="1"/>
</dbReference>
<dbReference type="Pfam" id="PF02223">
    <property type="entry name" value="Thymidylate_kin"/>
    <property type="match status" value="1"/>
</dbReference>
<dbReference type="SUPFAM" id="SSF52540">
    <property type="entry name" value="P-loop containing nucleoside triphosphate hydrolases"/>
    <property type="match status" value="1"/>
</dbReference>
<dbReference type="PROSITE" id="PS01331">
    <property type="entry name" value="THYMIDYLATE_KINASE"/>
    <property type="match status" value="1"/>
</dbReference>
<name>KTHY_AYWBP</name>
<accession>Q2NIY4</accession>
<gene>
    <name evidence="1" type="primary">tmk</name>
    <name type="ordered locus">AYWB_492</name>
</gene>
<proteinExistence type="inferred from homology"/>
<evidence type="ECO:0000255" key="1">
    <source>
        <dbReference type="HAMAP-Rule" id="MF_00165"/>
    </source>
</evidence>